<name>YIZC_BACSU</name>
<feature type="chain" id="PRO_0000386660" description="Uncharacterized protein YizC">
    <location>
        <begin position="1"/>
        <end position="65"/>
    </location>
</feature>
<keyword id="KW-1185">Reference proteome</keyword>
<proteinExistence type="predicted"/>
<sequence>MRNELFQQAKSFVQQAVMVTNGFEEGDQEQAILRAKNAVSSAYANSTDAERQQLHQFQNQLDKLQ</sequence>
<dbReference type="EMBL" id="AL009126">
    <property type="protein sequence ID" value="CAX52590.1"/>
    <property type="molecule type" value="Genomic_DNA"/>
</dbReference>
<dbReference type="RefSeq" id="WP_003245613.1">
    <property type="nucleotide sequence ID" value="NZ_OZ025638.1"/>
</dbReference>
<dbReference type="RefSeq" id="YP_003097702.1">
    <property type="nucleotide sequence ID" value="NC_000964.3"/>
</dbReference>
<dbReference type="SMR" id="C0H3Y5"/>
<dbReference type="STRING" id="224308.BSU11139"/>
<dbReference type="PaxDb" id="224308-BSU11139"/>
<dbReference type="EnsemblBacteria" id="CAX52590">
    <property type="protein sequence ID" value="CAX52590"/>
    <property type="gene ID" value="BSU_11139"/>
</dbReference>
<dbReference type="GeneID" id="8303093"/>
<dbReference type="KEGG" id="bsu:BSU11139"/>
<dbReference type="PATRIC" id="fig|224308.179.peg.1196"/>
<dbReference type="eggNOG" id="ENOG5033NSG">
    <property type="taxonomic scope" value="Bacteria"/>
</dbReference>
<dbReference type="InParanoid" id="C0H3Y5"/>
<dbReference type="OrthoDB" id="2692217at2"/>
<dbReference type="BioCyc" id="BSUB:BSU11139-MONOMER"/>
<dbReference type="Proteomes" id="UP000001570">
    <property type="component" value="Chromosome"/>
</dbReference>
<dbReference type="InterPro" id="IPR024217">
    <property type="entry name" value="DUF3813"/>
</dbReference>
<dbReference type="Pfam" id="PF12758">
    <property type="entry name" value="DUF3813"/>
    <property type="match status" value="1"/>
</dbReference>
<organism>
    <name type="scientific">Bacillus subtilis (strain 168)</name>
    <dbReference type="NCBI Taxonomy" id="224308"/>
    <lineage>
        <taxon>Bacteria</taxon>
        <taxon>Bacillati</taxon>
        <taxon>Bacillota</taxon>
        <taxon>Bacilli</taxon>
        <taxon>Bacillales</taxon>
        <taxon>Bacillaceae</taxon>
        <taxon>Bacillus</taxon>
    </lineage>
</organism>
<protein>
    <recommendedName>
        <fullName>Uncharacterized protein YizC</fullName>
    </recommendedName>
</protein>
<gene>
    <name type="primary">yizC</name>
    <name type="ordered locus">BSU11139</name>
</gene>
<accession>C0H3Y5</accession>
<reference key="1">
    <citation type="journal article" date="1997" name="Nature">
        <title>The complete genome sequence of the Gram-positive bacterium Bacillus subtilis.</title>
        <authorList>
            <person name="Kunst F."/>
            <person name="Ogasawara N."/>
            <person name="Moszer I."/>
            <person name="Albertini A.M."/>
            <person name="Alloni G."/>
            <person name="Azevedo V."/>
            <person name="Bertero M.G."/>
            <person name="Bessieres P."/>
            <person name="Bolotin A."/>
            <person name="Borchert S."/>
            <person name="Borriss R."/>
            <person name="Boursier L."/>
            <person name="Brans A."/>
            <person name="Braun M."/>
            <person name="Brignell S.C."/>
            <person name="Bron S."/>
            <person name="Brouillet S."/>
            <person name="Bruschi C.V."/>
            <person name="Caldwell B."/>
            <person name="Capuano V."/>
            <person name="Carter N.M."/>
            <person name="Choi S.-K."/>
            <person name="Codani J.-J."/>
            <person name="Connerton I.F."/>
            <person name="Cummings N.J."/>
            <person name="Daniel R.A."/>
            <person name="Denizot F."/>
            <person name="Devine K.M."/>
            <person name="Duesterhoeft A."/>
            <person name="Ehrlich S.D."/>
            <person name="Emmerson P.T."/>
            <person name="Entian K.-D."/>
            <person name="Errington J."/>
            <person name="Fabret C."/>
            <person name="Ferrari E."/>
            <person name="Foulger D."/>
            <person name="Fritz C."/>
            <person name="Fujita M."/>
            <person name="Fujita Y."/>
            <person name="Fuma S."/>
            <person name="Galizzi A."/>
            <person name="Galleron N."/>
            <person name="Ghim S.-Y."/>
            <person name="Glaser P."/>
            <person name="Goffeau A."/>
            <person name="Golightly E.J."/>
            <person name="Grandi G."/>
            <person name="Guiseppi G."/>
            <person name="Guy B.J."/>
            <person name="Haga K."/>
            <person name="Haiech J."/>
            <person name="Harwood C.R."/>
            <person name="Henaut A."/>
            <person name="Hilbert H."/>
            <person name="Holsappel S."/>
            <person name="Hosono S."/>
            <person name="Hullo M.-F."/>
            <person name="Itaya M."/>
            <person name="Jones L.-M."/>
            <person name="Joris B."/>
            <person name="Karamata D."/>
            <person name="Kasahara Y."/>
            <person name="Klaerr-Blanchard M."/>
            <person name="Klein C."/>
            <person name="Kobayashi Y."/>
            <person name="Koetter P."/>
            <person name="Koningstein G."/>
            <person name="Krogh S."/>
            <person name="Kumano M."/>
            <person name="Kurita K."/>
            <person name="Lapidus A."/>
            <person name="Lardinois S."/>
            <person name="Lauber J."/>
            <person name="Lazarevic V."/>
            <person name="Lee S.-M."/>
            <person name="Levine A."/>
            <person name="Liu H."/>
            <person name="Masuda S."/>
            <person name="Mauel C."/>
            <person name="Medigue C."/>
            <person name="Medina N."/>
            <person name="Mellado R.P."/>
            <person name="Mizuno M."/>
            <person name="Moestl D."/>
            <person name="Nakai S."/>
            <person name="Noback M."/>
            <person name="Noone D."/>
            <person name="O'Reilly M."/>
            <person name="Ogawa K."/>
            <person name="Ogiwara A."/>
            <person name="Oudega B."/>
            <person name="Park S.-H."/>
            <person name="Parro V."/>
            <person name="Pohl T.M."/>
            <person name="Portetelle D."/>
            <person name="Porwollik S."/>
            <person name="Prescott A.M."/>
            <person name="Presecan E."/>
            <person name="Pujic P."/>
            <person name="Purnelle B."/>
            <person name="Rapoport G."/>
            <person name="Rey M."/>
            <person name="Reynolds S."/>
            <person name="Rieger M."/>
            <person name="Rivolta C."/>
            <person name="Rocha E."/>
            <person name="Roche B."/>
            <person name="Rose M."/>
            <person name="Sadaie Y."/>
            <person name="Sato T."/>
            <person name="Scanlan E."/>
            <person name="Schleich S."/>
            <person name="Schroeter R."/>
            <person name="Scoffone F."/>
            <person name="Sekiguchi J."/>
            <person name="Sekowska A."/>
            <person name="Seror S.J."/>
            <person name="Serror P."/>
            <person name="Shin B.-S."/>
            <person name="Soldo B."/>
            <person name="Sorokin A."/>
            <person name="Tacconi E."/>
            <person name="Takagi T."/>
            <person name="Takahashi H."/>
            <person name="Takemaru K."/>
            <person name="Takeuchi M."/>
            <person name="Tamakoshi A."/>
            <person name="Tanaka T."/>
            <person name="Terpstra P."/>
            <person name="Tognoni A."/>
            <person name="Tosato V."/>
            <person name="Uchiyama S."/>
            <person name="Vandenbol M."/>
            <person name="Vannier F."/>
            <person name="Vassarotti A."/>
            <person name="Viari A."/>
            <person name="Wambutt R."/>
            <person name="Wedler E."/>
            <person name="Wedler H."/>
            <person name="Weitzenegger T."/>
            <person name="Winters P."/>
            <person name="Wipat A."/>
            <person name="Yamamoto H."/>
            <person name="Yamane K."/>
            <person name="Yasumoto K."/>
            <person name="Yata K."/>
            <person name="Yoshida K."/>
            <person name="Yoshikawa H.-F."/>
            <person name="Zumstein E."/>
            <person name="Yoshikawa H."/>
            <person name="Danchin A."/>
        </authorList>
    </citation>
    <scope>NUCLEOTIDE SEQUENCE [LARGE SCALE GENOMIC DNA]</scope>
    <source>
        <strain>168</strain>
    </source>
</reference>